<dbReference type="EC" id="3.1.-.-" evidence="1"/>
<dbReference type="EMBL" id="AM406671">
    <property type="protein sequence ID" value="CAL98065.1"/>
    <property type="molecule type" value="Genomic_DNA"/>
</dbReference>
<dbReference type="RefSeq" id="WP_011835335.1">
    <property type="nucleotide sequence ID" value="NC_009004.1"/>
</dbReference>
<dbReference type="SMR" id="A2RL98"/>
<dbReference type="STRING" id="416870.llmg_1487"/>
<dbReference type="GeneID" id="61109331"/>
<dbReference type="KEGG" id="llm:llmg_1487"/>
<dbReference type="eggNOG" id="COG0319">
    <property type="taxonomic scope" value="Bacteria"/>
</dbReference>
<dbReference type="HOGENOM" id="CLU_106710_3_0_9"/>
<dbReference type="OrthoDB" id="9807740at2"/>
<dbReference type="PhylomeDB" id="A2RL98"/>
<dbReference type="Proteomes" id="UP000000364">
    <property type="component" value="Chromosome"/>
</dbReference>
<dbReference type="GO" id="GO:0005737">
    <property type="term" value="C:cytoplasm"/>
    <property type="evidence" value="ECO:0007669"/>
    <property type="project" value="UniProtKB-SubCell"/>
</dbReference>
<dbReference type="GO" id="GO:0004222">
    <property type="term" value="F:metalloendopeptidase activity"/>
    <property type="evidence" value="ECO:0007669"/>
    <property type="project" value="InterPro"/>
</dbReference>
<dbReference type="GO" id="GO:0004521">
    <property type="term" value="F:RNA endonuclease activity"/>
    <property type="evidence" value="ECO:0007669"/>
    <property type="project" value="UniProtKB-UniRule"/>
</dbReference>
<dbReference type="GO" id="GO:0008270">
    <property type="term" value="F:zinc ion binding"/>
    <property type="evidence" value="ECO:0007669"/>
    <property type="project" value="UniProtKB-UniRule"/>
</dbReference>
<dbReference type="GO" id="GO:0006364">
    <property type="term" value="P:rRNA processing"/>
    <property type="evidence" value="ECO:0007669"/>
    <property type="project" value="UniProtKB-UniRule"/>
</dbReference>
<dbReference type="Gene3D" id="3.40.390.30">
    <property type="entry name" value="Metalloproteases ('zincins'), catalytic domain"/>
    <property type="match status" value="1"/>
</dbReference>
<dbReference type="HAMAP" id="MF_00009">
    <property type="entry name" value="Endoribonucl_YbeY"/>
    <property type="match status" value="1"/>
</dbReference>
<dbReference type="InterPro" id="IPR023091">
    <property type="entry name" value="MetalPrtase_cat_dom_sf_prd"/>
</dbReference>
<dbReference type="InterPro" id="IPR002036">
    <property type="entry name" value="YbeY"/>
</dbReference>
<dbReference type="InterPro" id="IPR020549">
    <property type="entry name" value="YbeY_CS"/>
</dbReference>
<dbReference type="NCBIfam" id="TIGR00043">
    <property type="entry name" value="rRNA maturation RNase YbeY"/>
    <property type="match status" value="1"/>
</dbReference>
<dbReference type="PANTHER" id="PTHR46986">
    <property type="entry name" value="ENDORIBONUCLEASE YBEY, CHLOROPLASTIC"/>
    <property type="match status" value="1"/>
</dbReference>
<dbReference type="PANTHER" id="PTHR46986:SF1">
    <property type="entry name" value="ENDORIBONUCLEASE YBEY, CHLOROPLASTIC"/>
    <property type="match status" value="1"/>
</dbReference>
<dbReference type="Pfam" id="PF02130">
    <property type="entry name" value="YbeY"/>
    <property type="match status" value="1"/>
</dbReference>
<dbReference type="SUPFAM" id="SSF55486">
    <property type="entry name" value="Metalloproteases ('zincins'), catalytic domain"/>
    <property type="match status" value="1"/>
</dbReference>
<dbReference type="PROSITE" id="PS01306">
    <property type="entry name" value="UPF0054"/>
    <property type="match status" value="1"/>
</dbReference>
<protein>
    <recommendedName>
        <fullName evidence="1">Endoribonuclease YbeY</fullName>
        <ecNumber evidence="1">3.1.-.-</ecNumber>
    </recommendedName>
</protein>
<comment type="function">
    <text evidence="1">Single strand-specific metallo-endoribonuclease involved in late-stage 70S ribosome quality control and in maturation of the 3' terminus of the 16S rRNA.</text>
</comment>
<comment type="cofactor">
    <cofactor evidence="1">
        <name>Zn(2+)</name>
        <dbReference type="ChEBI" id="CHEBI:29105"/>
    </cofactor>
    <text evidence="1">Binds 1 zinc ion.</text>
</comment>
<comment type="subcellular location">
    <subcellularLocation>
        <location evidence="1">Cytoplasm</location>
    </subcellularLocation>
</comment>
<comment type="similarity">
    <text evidence="1">Belongs to the endoribonuclease YbeY family.</text>
</comment>
<gene>
    <name evidence="1" type="primary">ybeY</name>
    <name type="ordered locus">llmg_1487</name>
</gene>
<organism>
    <name type="scientific">Lactococcus lactis subsp. cremoris (strain MG1363)</name>
    <dbReference type="NCBI Taxonomy" id="416870"/>
    <lineage>
        <taxon>Bacteria</taxon>
        <taxon>Bacillati</taxon>
        <taxon>Bacillota</taxon>
        <taxon>Bacilli</taxon>
        <taxon>Lactobacillales</taxon>
        <taxon>Streptococcaceae</taxon>
        <taxon>Lactococcus</taxon>
        <taxon>Lactococcus cremoris subsp. cremoris</taxon>
    </lineage>
</organism>
<proteinExistence type="inferred from homology"/>
<accession>A2RL98</accession>
<sequence length="162" mass="18785">MYVELVDETGQVPSEIIEQTKEVLAFAAKKLDLKESTEMSVTFVDNARSHELNLQYRETDRPTDVISLEYKPDESEFFFDEDMELPEELLEEMDPFIGELFISIDKAAEQAADYGHSIEREYGWLAVHGFLHINGYDHYTPEEESEMFALQEEILTAYGLTR</sequence>
<name>YBEY_LACLM</name>
<keyword id="KW-0963">Cytoplasm</keyword>
<keyword id="KW-0255">Endonuclease</keyword>
<keyword id="KW-0378">Hydrolase</keyword>
<keyword id="KW-0479">Metal-binding</keyword>
<keyword id="KW-0540">Nuclease</keyword>
<keyword id="KW-0690">Ribosome biogenesis</keyword>
<keyword id="KW-0698">rRNA processing</keyword>
<keyword id="KW-0862">Zinc</keyword>
<evidence type="ECO:0000255" key="1">
    <source>
        <dbReference type="HAMAP-Rule" id="MF_00009"/>
    </source>
</evidence>
<feature type="chain" id="PRO_1000000726" description="Endoribonuclease YbeY">
    <location>
        <begin position="1"/>
        <end position="162"/>
    </location>
</feature>
<feature type="binding site" evidence="1">
    <location>
        <position position="128"/>
    </location>
    <ligand>
        <name>Zn(2+)</name>
        <dbReference type="ChEBI" id="CHEBI:29105"/>
        <note>catalytic</note>
    </ligand>
</feature>
<feature type="binding site" evidence="1">
    <location>
        <position position="132"/>
    </location>
    <ligand>
        <name>Zn(2+)</name>
        <dbReference type="ChEBI" id="CHEBI:29105"/>
        <note>catalytic</note>
    </ligand>
</feature>
<feature type="binding site" evidence="1">
    <location>
        <position position="138"/>
    </location>
    <ligand>
        <name>Zn(2+)</name>
        <dbReference type="ChEBI" id="CHEBI:29105"/>
        <note>catalytic</note>
    </ligand>
</feature>
<reference key="1">
    <citation type="journal article" date="2007" name="J. Bacteriol.">
        <title>The complete genome sequence of the lactic acid bacterial paradigm Lactococcus lactis subsp. cremoris MG1363.</title>
        <authorList>
            <person name="Wegmann U."/>
            <person name="O'Connell-Motherway M."/>
            <person name="Zomer A."/>
            <person name="Buist G."/>
            <person name="Shearman C."/>
            <person name="Canchaya C."/>
            <person name="Ventura M."/>
            <person name="Goesmann A."/>
            <person name="Gasson M.J."/>
            <person name="Kuipers O.P."/>
            <person name="van Sinderen D."/>
            <person name="Kok J."/>
        </authorList>
    </citation>
    <scope>NUCLEOTIDE SEQUENCE [LARGE SCALE GENOMIC DNA]</scope>
    <source>
        <strain>MG1363</strain>
    </source>
</reference>